<proteinExistence type="evidence at transcript level"/>
<keyword id="KW-0966">Cell projection</keyword>
<keyword id="KW-0969">Cilium</keyword>
<keyword id="KW-0970">Cilium biogenesis/degradation</keyword>
<keyword id="KW-0175">Coiled coil</keyword>
<keyword id="KW-1185">Reference proteome</keyword>
<keyword id="KW-0677">Repeat</keyword>
<keyword id="KW-0802">TPR repeat</keyword>
<reference key="1">
    <citation type="submission" date="2007-03" db="EMBL/GenBank/DDBJ databases">
        <authorList>
            <consortium name="NIH - Xenopus Gene Collection (XGC) project"/>
        </authorList>
    </citation>
    <scope>NUCLEOTIDE SEQUENCE [LARGE SCALE MRNA]</scope>
    <source>
        <tissue>Tadpole</tissue>
    </source>
</reference>
<name>IT70A_XENTR</name>
<accession>A4IHR1</accession>
<organism>
    <name type="scientific">Xenopus tropicalis</name>
    <name type="common">Western clawed frog</name>
    <name type="synonym">Silurana tropicalis</name>
    <dbReference type="NCBI Taxonomy" id="8364"/>
    <lineage>
        <taxon>Eukaryota</taxon>
        <taxon>Metazoa</taxon>
        <taxon>Chordata</taxon>
        <taxon>Craniata</taxon>
        <taxon>Vertebrata</taxon>
        <taxon>Euteleostomi</taxon>
        <taxon>Amphibia</taxon>
        <taxon>Batrachia</taxon>
        <taxon>Anura</taxon>
        <taxon>Pipoidea</taxon>
        <taxon>Pipidae</taxon>
        <taxon>Xenopodinae</taxon>
        <taxon>Xenopus</taxon>
        <taxon>Silurana</taxon>
    </lineage>
</organism>
<sequence>MAARQIKDGEYTATIYKLIKEARYGEAIQILSNELQKQYRSRAGLSLLGYCYYQIQDFVNAADCYEQLIQITPEVEEYKLYYAQSLYKACMYPEAMKATFALDSSAYQSKMLKLQASIRYGEEDISGAKSLVEQMPSEDPESEINMGCLLYKEGHYEEACKKFITAMQVMGYKQDLSYNIALCYYSMKQYAPALKHIADIIERGIREHPELGVGMTTEGIEVRSVGNTLVLHETALIEAFNLKAAIEYQLKNYEAAQEALTDMPPRSEEELDPVTLHNQALMNMDTKPTEGFEKLQFLLQQNPFPPETFGNLLLLYCKYEYFDLAADVLAENAHLTYKFLTPYLYDFLDAMITCQTAPEEAFFKLDELAGMLTEQMRKLTKQVQEARHNRDDEAVKKAVNEYDETLEKYIPVLMAQAKIYWNMENYQMVEKIFRKSVEFCNEHDIWKLNVAHVLFMQDNKYKEAIGFYEPIVKKHYDNILNVSAAVLANLCVSYIMTSQNEEAEELMRKIEKEEEQIAYENPDKKIYHLCIVNLVIGTLYCAKGNYEFGISRVIKSLEPYNKKLGTDTWYHAKRCFLSLLENMSKHMIMLRDDVIAECLQFLEHCEIYGRNIPAVIEQPLEEERMHIGKNTVTYESRQLKALLYEITSWNL</sequence>
<protein>
    <recommendedName>
        <fullName>Intraflagellar transport protein 70A</fullName>
    </recommendedName>
    <alternativeName>
        <fullName>Tetratricopeptide repeat protein 30A</fullName>
        <shortName>TPR repeat protein 30A</shortName>
    </alternativeName>
</protein>
<gene>
    <name type="primary">ift70a</name>
    <name type="synonym">ttc30</name>
    <name type="synonym">ttc30a</name>
</gene>
<comment type="function">
    <text evidence="1">Required for polyglutamylation of axonemal tubulin. Plays a role in anterograde intraflagellar transport (IFT), the process by which cilia precursors are transported from the base of the cilium to the site of their incorporation at the tip.</text>
</comment>
<comment type="subcellular location">
    <subcellularLocation>
        <location evidence="1">Cell projection</location>
        <location evidence="1">Cilium</location>
    </subcellularLocation>
</comment>
<comment type="similarity">
    <text evidence="3">Belongs to the TTC30/dfy-1/fleer family.</text>
</comment>
<feature type="chain" id="PRO_0000333208" description="Intraflagellar transport protein 70A">
    <location>
        <begin position="1"/>
        <end position="651"/>
    </location>
</feature>
<feature type="repeat" description="TPR 1">
    <location>
        <begin position="8"/>
        <end position="41"/>
    </location>
</feature>
<feature type="repeat" description="TPR 2">
    <location>
        <begin position="42"/>
        <end position="75"/>
    </location>
</feature>
<feature type="repeat" description="TPR 3">
    <location>
        <begin position="140"/>
        <end position="173"/>
    </location>
</feature>
<feature type="repeat" description="TPR 4">
    <location>
        <begin position="175"/>
        <end position="207"/>
    </location>
</feature>
<feature type="repeat" description="TPR 5">
    <location>
        <begin position="372"/>
        <end position="405"/>
    </location>
</feature>
<feature type="repeat" description="TPR 6">
    <location>
        <begin position="410"/>
        <end position="443"/>
    </location>
</feature>
<feature type="repeat" description="TPR 7">
    <location>
        <begin position="445"/>
        <end position="478"/>
    </location>
</feature>
<feature type="repeat" description="TPR 8">
    <location>
        <begin position="530"/>
        <end position="563"/>
    </location>
</feature>
<feature type="coiled-coil region" evidence="2">
    <location>
        <begin position="494"/>
        <end position="521"/>
    </location>
</feature>
<dbReference type="EMBL" id="BC135644">
    <property type="protein sequence ID" value="AAI35645.1"/>
    <property type="molecule type" value="mRNA"/>
</dbReference>
<dbReference type="RefSeq" id="NP_001096303.1">
    <property type="nucleotide sequence ID" value="NM_001102833.1"/>
</dbReference>
<dbReference type="SMR" id="A4IHR1"/>
<dbReference type="FunCoup" id="A4IHR1">
    <property type="interactions" value="348"/>
</dbReference>
<dbReference type="STRING" id="8364.ENSXETP00000008653"/>
<dbReference type="PaxDb" id="8364-ENSXETP00000060601"/>
<dbReference type="DNASU" id="100124881"/>
<dbReference type="GeneID" id="100124881"/>
<dbReference type="KEGG" id="xtr:100124881"/>
<dbReference type="AGR" id="Xenbase:XB-GENE-1221159"/>
<dbReference type="CTD" id="92104"/>
<dbReference type="Xenbase" id="XB-GENE-1221159">
    <property type="gene designation" value="ift70a"/>
</dbReference>
<dbReference type="eggNOG" id="KOG4340">
    <property type="taxonomic scope" value="Eukaryota"/>
</dbReference>
<dbReference type="InParanoid" id="A4IHR1"/>
<dbReference type="OrthoDB" id="10249577at2759"/>
<dbReference type="Proteomes" id="UP000008143">
    <property type="component" value="Chromosome 6"/>
</dbReference>
<dbReference type="Bgee" id="ENSXETG00000008469">
    <property type="expression patterns" value="Expressed in testis and 13 other cell types or tissues"/>
</dbReference>
<dbReference type="ExpressionAtlas" id="A4IHR1">
    <property type="expression patterns" value="baseline"/>
</dbReference>
<dbReference type="GO" id="GO:0005879">
    <property type="term" value="C:axonemal microtubule"/>
    <property type="evidence" value="ECO:0000250"/>
    <property type="project" value="UniProtKB"/>
</dbReference>
<dbReference type="GO" id="GO:0005929">
    <property type="term" value="C:cilium"/>
    <property type="evidence" value="ECO:0000250"/>
    <property type="project" value="UniProtKB"/>
</dbReference>
<dbReference type="GO" id="GO:0060271">
    <property type="term" value="P:cilium assembly"/>
    <property type="evidence" value="ECO:0000315"/>
    <property type="project" value="Xenbase"/>
</dbReference>
<dbReference type="GO" id="GO:0042073">
    <property type="term" value="P:intraciliary transport"/>
    <property type="evidence" value="ECO:0000250"/>
    <property type="project" value="UniProtKB"/>
</dbReference>
<dbReference type="GO" id="GO:0001822">
    <property type="term" value="P:kidney development"/>
    <property type="evidence" value="ECO:0000315"/>
    <property type="project" value="Xenbase"/>
</dbReference>
<dbReference type="GO" id="GO:0018095">
    <property type="term" value="P:protein polyglutamylation"/>
    <property type="evidence" value="ECO:0000250"/>
    <property type="project" value="UniProtKB"/>
</dbReference>
<dbReference type="GO" id="GO:0001501">
    <property type="term" value="P:skeletal system development"/>
    <property type="evidence" value="ECO:0000315"/>
    <property type="project" value="Xenbase"/>
</dbReference>
<dbReference type="FunFam" id="1.25.40.10:FF:000226">
    <property type="entry name" value="Tetratricopeptide repeat protein 30A"/>
    <property type="match status" value="1"/>
</dbReference>
<dbReference type="FunFam" id="1.25.40.10:FF:000211">
    <property type="entry name" value="tetratricopeptide repeat protein 30B"/>
    <property type="match status" value="1"/>
</dbReference>
<dbReference type="Gene3D" id="1.25.40.10">
    <property type="entry name" value="Tetratricopeptide repeat domain"/>
    <property type="match status" value="3"/>
</dbReference>
<dbReference type="InterPro" id="IPR011990">
    <property type="entry name" value="TPR-like_helical_dom_sf"/>
</dbReference>
<dbReference type="InterPro" id="IPR019734">
    <property type="entry name" value="TPR_rpt"/>
</dbReference>
<dbReference type="InterPro" id="IPR039941">
    <property type="entry name" value="TT30"/>
</dbReference>
<dbReference type="PANTHER" id="PTHR20931">
    <property type="entry name" value="TETRATRICOPEPTIDE REPEAT PROTEIN 30"/>
    <property type="match status" value="1"/>
</dbReference>
<dbReference type="PANTHER" id="PTHR20931:SF0">
    <property type="entry name" value="TETRATRICOPEPTIDE REPEAT PROTEIN 30"/>
    <property type="match status" value="1"/>
</dbReference>
<dbReference type="Pfam" id="PF13174">
    <property type="entry name" value="TPR_6"/>
    <property type="match status" value="1"/>
</dbReference>
<dbReference type="SMART" id="SM00028">
    <property type="entry name" value="TPR"/>
    <property type="match status" value="4"/>
</dbReference>
<dbReference type="SUPFAM" id="SSF48452">
    <property type="entry name" value="TPR-like"/>
    <property type="match status" value="3"/>
</dbReference>
<dbReference type="PROSITE" id="PS50005">
    <property type="entry name" value="TPR"/>
    <property type="match status" value="3"/>
</dbReference>
<dbReference type="PROSITE" id="PS50293">
    <property type="entry name" value="TPR_REGION"/>
    <property type="match status" value="3"/>
</dbReference>
<evidence type="ECO:0000250" key="1"/>
<evidence type="ECO:0000255" key="2"/>
<evidence type="ECO:0000305" key="3"/>